<feature type="chain" id="PRO_0000211877" description="UPF0122 protein SA1079">
    <location>
        <begin position="1"/>
        <end position="110"/>
    </location>
</feature>
<reference key="1">
    <citation type="journal article" date="2001" name="Lancet">
        <title>Whole genome sequencing of meticillin-resistant Staphylococcus aureus.</title>
        <authorList>
            <person name="Kuroda M."/>
            <person name="Ohta T."/>
            <person name="Uchiyama I."/>
            <person name="Baba T."/>
            <person name="Yuzawa H."/>
            <person name="Kobayashi I."/>
            <person name="Cui L."/>
            <person name="Oguchi A."/>
            <person name="Aoki K."/>
            <person name="Nagai Y."/>
            <person name="Lian J.-Q."/>
            <person name="Ito T."/>
            <person name="Kanamori M."/>
            <person name="Matsumaru H."/>
            <person name="Maruyama A."/>
            <person name="Murakami H."/>
            <person name="Hosoyama A."/>
            <person name="Mizutani-Ui Y."/>
            <person name="Takahashi N.K."/>
            <person name="Sawano T."/>
            <person name="Inoue R."/>
            <person name="Kaito C."/>
            <person name="Sekimizu K."/>
            <person name="Hirakawa H."/>
            <person name="Kuhara S."/>
            <person name="Goto S."/>
            <person name="Yabuzaki J."/>
            <person name="Kanehisa M."/>
            <person name="Yamashita A."/>
            <person name="Oshima K."/>
            <person name="Furuya K."/>
            <person name="Yoshino C."/>
            <person name="Shiba T."/>
            <person name="Hattori M."/>
            <person name="Ogasawara N."/>
            <person name="Hayashi H."/>
            <person name="Hiramatsu K."/>
        </authorList>
    </citation>
    <scope>NUCLEOTIDE SEQUENCE [LARGE SCALE GENOMIC DNA]</scope>
    <source>
        <strain>N315</strain>
    </source>
</reference>
<gene>
    <name type="ordered locus">SA1079</name>
</gene>
<sequence length="110" mass="13581">MGQNDLVKTLRMNYLFDFYQSLLTNKQRNYLELFYLEDYSLSEIADTFNVSRQAVYDNIRRTGDLVEDYEKKLELYQKFEQRREIYDEMKQHLSNPEQIQRYIQQLEDLE</sequence>
<comment type="function">
    <text evidence="1">Might take part in the signal recognition particle (SRP) pathway. This is inferred from the conservation of its genetic proximity to ftsY/ffh. May be a regulatory protein.</text>
</comment>
<comment type="similarity">
    <text evidence="1">Belongs to the UPF0122 family.</text>
</comment>
<name>Y1079_STAAN</name>
<organism>
    <name type="scientific">Staphylococcus aureus (strain N315)</name>
    <dbReference type="NCBI Taxonomy" id="158879"/>
    <lineage>
        <taxon>Bacteria</taxon>
        <taxon>Bacillati</taxon>
        <taxon>Bacillota</taxon>
        <taxon>Bacilli</taxon>
        <taxon>Bacillales</taxon>
        <taxon>Staphylococcaceae</taxon>
        <taxon>Staphylococcus</taxon>
    </lineage>
</organism>
<dbReference type="EMBL" id="BA000018">
    <property type="protein sequence ID" value="BAB42331.1"/>
    <property type="molecule type" value="Genomic_DNA"/>
</dbReference>
<dbReference type="PIR" id="G89896">
    <property type="entry name" value="G89896"/>
</dbReference>
<dbReference type="RefSeq" id="WP_000531320.1">
    <property type="nucleotide sequence ID" value="NC_002745.2"/>
</dbReference>
<dbReference type="SMR" id="P67249"/>
<dbReference type="EnsemblBacteria" id="BAB42331">
    <property type="protein sequence ID" value="BAB42331"/>
    <property type="gene ID" value="BAB42331"/>
</dbReference>
<dbReference type="KEGG" id="sau:SA1079"/>
<dbReference type="HOGENOM" id="CLU_129218_1_1_9"/>
<dbReference type="Gene3D" id="1.10.10.10">
    <property type="entry name" value="Winged helix-like DNA-binding domain superfamily/Winged helix DNA-binding domain"/>
    <property type="match status" value="1"/>
</dbReference>
<dbReference type="HAMAP" id="MF_00245">
    <property type="entry name" value="UPF0122"/>
    <property type="match status" value="1"/>
</dbReference>
<dbReference type="InterPro" id="IPR013324">
    <property type="entry name" value="RNA_pol_sigma_r3/r4-like"/>
</dbReference>
<dbReference type="InterPro" id="IPR007394">
    <property type="entry name" value="UPF0122"/>
</dbReference>
<dbReference type="InterPro" id="IPR054831">
    <property type="entry name" value="UPF0122_fam_protein"/>
</dbReference>
<dbReference type="InterPro" id="IPR036388">
    <property type="entry name" value="WH-like_DNA-bd_sf"/>
</dbReference>
<dbReference type="NCBIfam" id="NF001067">
    <property type="entry name" value="PRK00118.1-2"/>
    <property type="match status" value="1"/>
</dbReference>
<dbReference type="NCBIfam" id="NF001070">
    <property type="entry name" value="PRK00118.1-6"/>
    <property type="match status" value="1"/>
</dbReference>
<dbReference type="NCBIfam" id="NF045758">
    <property type="entry name" value="YlxM"/>
    <property type="match status" value="1"/>
</dbReference>
<dbReference type="PANTHER" id="PTHR40083">
    <property type="entry name" value="UPF0122 PROTEIN CBO2450/CLC_2298"/>
    <property type="match status" value="1"/>
</dbReference>
<dbReference type="PANTHER" id="PTHR40083:SF1">
    <property type="entry name" value="UPF0122 PROTEIN YLXM"/>
    <property type="match status" value="1"/>
</dbReference>
<dbReference type="Pfam" id="PF04297">
    <property type="entry name" value="UPF0122"/>
    <property type="match status" value="1"/>
</dbReference>
<dbReference type="SUPFAM" id="SSF88659">
    <property type="entry name" value="Sigma3 and sigma4 domains of RNA polymerase sigma factors"/>
    <property type="match status" value="1"/>
</dbReference>
<protein>
    <recommendedName>
        <fullName evidence="1">UPF0122 protein SA1079</fullName>
    </recommendedName>
</protein>
<proteinExistence type="inferred from homology"/>
<accession>P67249</accession>
<accession>Q99UN4</accession>
<evidence type="ECO:0000255" key="1">
    <source>
        <dbReference type="HAMAP-Rule" id="MF_00245"/>
    </source>
</evidence>